<organism>
    <name type="scientific">Pisum sativum</name>
    <name type="common">Garden pea</name>
    <name type="synonym">Lathyrus oleraceus</name>
    <dbReference type="NCBI Taxonomy" id="3888"/>
    <lineage>
        <taxon>Eukaryota</taxon>
        <taxon>Viridiplantae</taxon>
        <taxon>Streptophyta</taxon>
        <taxon>Embryophyta</taxon>
        <taxon>Tracheophyta</taxon>
        <taxon>Spermatophyta</taxon>
        <taxon>Magnoliopsida</taxon>
        <taxon>eudicotyledons</taxon>
        <taxon>Gunneridae</taxon>
        <taxon>Pentapetalae</taxon>
        <taxon>rosids</taxon>
        <taxon>fabids</taxon>
        <taxon>Fabales</taxon>
        <taxon>Fabaceae</taxon>
        <taxon>Papilionoideae</taxon>
        <taxon>50 kb inversion clade</taxon>
        <taxon>NPAAA clade</taxon>
        <taxon>Hologalegina</taxon>
        <taxon>IRL clade</taxon>
        <taxon>Fabeae</taxon>
        <taxon>Pisum</taxon>
    </lineage>
</organism>
<dbReference type="EMBL" id="Z25888">
    <property type="protein sequence ID" value="CAA81107.1"/>
    <property type="molecule type" value="mRNA"/>
</dbReference>
<dbReference type="PIR" id="S43776">
    <property type="entry name" value="S40171"/>
</dbReference>
<dbReference type="SMR" id="P36875"/>
<dbReference type="GO" id="GO:0005829">
    <property type="term" value="C:cytosol"/>
    <property type="evidence" value="ECO:0007669"/>
    <property type="project" value="TreeGrafter"/>
</dbReference>
<dbReference type="GO" id="GO:0005634">
    <property type="term" value="C:nucleus"/>
    <property type="evidence" value="ECO:0007669"/>
    <property type="project" value="TreeGrafter"/>
</dbReference>
<dbReference type="GO" id="GO:0000159">
    <property type="term" value="C:protein phosphatase type 2A complex"/>
    <property type="evidence" value="ECO:0007669"/>
    <property type="project" value="TreeGrafter"/>
</dbReference>
<dbReference type="GO" id="GO:0019888">
    <property type="term" value="F:protein phosphatase regulator activity"/>
    <property type="evidence" value="ECO:0007669"/>
    <property type="project" value="TreeGrafter"/>
</dbReference>
<dbReference type="Gene3D" id="1.25.10.10">
    <property type="entry name" value="Leucine-rich Repeat Variant"/>
    <property type="match status" value="1"/>
</dbReference>
<dbReference type="InterPro" id="IPR011989">
    <property type="entry name" value="ARM-like"/>
</dbReference>
<dbReference type="InterPro" id="IPR016024">
    <property type="entry name" value="ARM-type_fold"/>
</dbReference>
<dbReference type="InterPro" id="IPR000357">
    <property type="entry name" value="HEAT"/>
</dbReference>
<dbReference type="InterPro" id="IPR021133">
    <property type="entry name" value="HEAT_type_2"/>
</dbReference>
<dbReference type="InterPro" id="IPR054573">
    <property type="entry name" value="PP2A/SF3B1-like_HEAT"/>
</dbReference>
<dbReference type="InterPro" id="IPR051023">
    <property type="entry name" value="PP2A_Regulatory_Subunit_A"/>
</dbReference>
<dbReference type="PANTHER" id="PTHR10648:SF4">
    <property type="entry name" value="PROTEIN PHOSPHATASE 2 (FORMERLY 2A), REGULATORY SUBUNIT A, BETA ISOFORM-RELATED"/>
    <property type="match status" value="1"/>
</dbReference>
<dbReference type="PANTHER" id="PTHR10648">
    <property type="entry name" value="SERINE/THREONINE-PROTEIN PHOSPHATASE PP2A 65 KDA REGULATORY SUBUNIT"/>
    <property type="match status" value="1"/>
</dbReference>
<dbReference type="Pfam" id="PF02985">
    <property type="entry name" value="HEAT"/>
    <property type="match status" value="2"/>
</dbReference>
<dbReference type="Pfam" id="PF22646">
    <property type="entry name" value="PPP2R1A-like_HEAT"/>
    <property type="match status" value="1"/>
</dbReference>
<dbReference type="SUPFAM" id="SSF48371">
    <property type="entry name" value="ARM repeat"/>
    <property type="match status" value="1"/>
</dbReference>
<dbReference type="PROSITE" id="PS50077">
    <property type="entry name" value="HEAT_REPEAT"/>
    <property type="match status" value="8"/>
</dbReference>
<sequence length="395" mass="43912">VEAAHLKTDIMSVFDDLTQDDQDSFRFLAVEGCAALGKLLEPQDCLAHILPVIVNFSQDKSWRVRYMVANQLYELCEAVGPDSTKTELVPAYVRLLRDNVAEVRIAAAGKVSKFSRILSPELAIQHILPCVKELSTDSSQHVRSALASVIMGMAPVLGKDATIEQLLPIFLSLLKDEFPDVRLNIISKLDQVNQVIGIDLLSQSLLPAIVELAEDRHWRVRLAIIEYIPLLASQLGVGFFDDKLGALIMQWLKDKEYSIRNAAANNVKRLAAEEFGPEWAMQHIIPQVLDMINDPHYLYRMTILHAISLLAPVLGSEITSTNLLPLVVNASKDRVPNIKFNVAKVLQSLIPIVDESVVESTIRPCLVELSEDPDVDVRFFASQALQSSDQVKMSS</sequence>
<protein>
    <recommendedName>
        <fullName>Protein phosphatase PP2A regulatory subunit A</fullName>
    </recommendedName>
    <alternativeName>
        <fullName>PR65</fullName>
    </alternativeName>
</protein>
<keyword id="KW-0677">Repeat</keyword>
<comment type="function">
    <text evidence="1">The PR65 subunit of protein phosphatase 2A serves as a scaffolding molecule to coordinate the assembly of the catalytic subunit and a variable regulatory B subunit.</text>
</comment>
<comment type="subunit">
    <text>PP2A exists in several trimeric forms, all of which consist of a core composed of a catalytic subunit associated with a 65 kDa regulatory subunit (PR65) (subunit A). The core complex associates with a third, variable subunit (subunit B), which confers distinct properties to the holoenzyme.</text>
</comment>
<comment type="similarity">
    <text evidence="2">Belongs to the phosphatase 2A regulatory subunit A family.</text>
</comment>
<proteinExistence type="evidence at transcript level"/>
<evidence type="ECO:0000250" key="1"/>
<evidence type="ECO:0000305" key="2"/>
<name>2AAA_PEA</name>
<feature type="chain" id="PRO_0000071412" description="Protein phosphatase PP2A regulatory subunit A">
    <location>
        <begin position="1" status="less than"/>
        <end position="395"/>
    </location>
</feature>
<feature type="repeat" description="HEAT 1">
    <location>
        <begin position="44"/>
        <end position="81"/>
    </location>
</feature>
<feature type="repeat" description="HEAT 2">
    <location>
        <begin position="83"/>
        <end position="120"/>
    </location>
</feature>
<feature type="repeat" description="HEAT 3">
    <location>
        <begin position="122"/>
        <end position="159"/>
    </location>
</feature>
<feature type="repeat" description="HEAT 4">
    <location>
        <begin position="161"/>
        <end position="198"/>
    </location>
</feature>
<feature type="repeat" description="HEAT 5">
    <location>
        <begin position="200"/>
        <end position="237"/>
    </location>
</feature>
<feature type="repeat" description="HEAT 6">
    <location>
        <begin position="239"/>
        <end position="276"/>
    </location>
</feature>
<feature type="repeat" description="HEAT 7">
    <location>
        <begin position="279"/>
        <end position="316"/>
    </location>
</feature>
<feature type="repeat" description="HEAT 8">
    <location>
        <begin position="318"/>
        <end position="355"/>
    </location>
</feature>
<feature type="non-terminal residue">
    <location>
        <position position="1"/>
    </location>
</feature>
<reference key="1">
    <citation type="journal article" date="1994" name="Plant Mol. Biol.">
        <title>A homologue of the 65 kDa regulatory subunit of protein phosphatase 2A in early pea (Pisum sativum L.) embryos.</title>
        <authorList>
            <person name="Evans I.M."/>
            <person name="Fawcett T."/>
            <person name="Boulter D."/>
            <person name="Fordham-Skelton A.P."/>
        </authorList>
    </citation>
    <scope>NUCLEOTIDE SEQUENCE [MRNA]</scope>
    <source>
        <strain>cv. JI 813</strain>
    </source>
</reference>
<accession>P36875</accession>